<gene>
    <name type="primary">Dlg5</name>
</gene>
<reference key="1">
    <citation type="journal article" date="2005" name="Science">
        <title>The transcriptional landscape of the mammalian genome.</title>
        <authorList>
            <person name="Carninci P."/>
            <person name="Kasukawa T."/>
            <person name="Katayama S."/>
            <person name="Gough J."/>
            <person name="Frith M.C."/>
            <person name="Maeda N."/>
            <person name="Oyama R."/>
            <person name="Ravasi T."/>
            <person name="Lenhard B."/>
            <person name="Wells C."/>
            <person name="Kodzius R."/>
            <person name="Shimokawa K."/>
            <person name="Bajic V.B."/>
            <person name="Brenner S.E."/>
            <person name="Batalov S."/>
            <person name="Forrest A.R."/>
            <person name="Zavolan M."/>
            <person name="Davis M.J."/>
            <person name="Wilming L.G."/>
            <person name="Aidinis V."/>
            <person name="Allen J.E."/>
            <person name="Ambesi-Impiombato A."/>
            <person name="Apweiler R."/>
            <person name="Aturaliya R.N."/>
            <person name="Bailey T.L."/>
            <person name="Bansal M."/>
            <person name="Baxter L."/>
            <person name="Beisel K.W."/>
            <person name="Bersano T."/>
            <person name="Bono H."/>
            <person name="Chalk A.M."/>
            <person name="Chiu K.P."/>
            <person name="Choudhary V."/>
            <person name="Christoffels A."/>
            <person name="Clutterbuck D.R."/>
            <person name="Crowe M.L."/>
            <person name="Dalla E."/>
            <person name="Dalrymple B.P."/>
            <person name="de Bono B."/>
            <person name="Della Gatta G."/>
            <person name="di Bernardo D."/>
            <person name="Down T."/>
            <person name="Engstrom P."/>
            <person name="Fagiolini M."/>
            <person name="Faulkner G."/>
            <person name="Fletcher C.F."/>
            <person name="Fukushima T."/>
            <person name="Furuno M."/>
            <person name="Futaki S."/>
            <person name="Gariboldi M."/>
            <person name="Georgii-Hemming P."/>
            <person name="Gingeras T.R."/>
            <person name="Gojobori T."/>
            <person name="Green R.E."/>
            <person name="Gustincich S."/>
            <person name="Harbers M."/>
            <person name="Hayashi Y."/>
            <person name="Hensch T.K."/>
            <person name="Hirokawa N."/>
            <person name="Hill D."/>
            <person name="Huminiecki L."/>
            <person name="Iacono M."/>
            <person name="Ikeo K."/>
            <person name="Iwama A."/>
            <person name="Ishikawa T."/>
            <person name="Jakt M."/>
            <person name="Kanapin A."/>
            <person name="Katoh M."/>
            <person name="Kawasawa Y."/>
            <person name="Kelso J."/>
            <person name="Kitamura H."/>
            <person name="Kitano H."/>
            <person name="Kollias G."/>
            <person name="Krishnan S.P."/>
            <person name="Kruger A."/>
            <person name="Kummerfeld S.K."/>
            <person name="Kurochkin I.V."/>
            <person name="Lareau L.F."/>
            <person name="Lazarevic D."/>
            <person name="Lipovich L."/>
            <person name="Liu J."/>
            <person name="Liuni S."/>
            <person name="McWilliam S."/>
            <person name="Madan Babu M."/>
            <person name="Madera M."/>
            <person name="Marchionni L."/>
            <person name="Matsuda H."/>
            <person name="Matsuzawa S."/>
            <person name="Miki H."/>
            <person name="Mignone F."/>
            <person name="Miyake S."/>
            <person name="Morris K."/>
            <person name="Mottagui-Tabar S."/>
            <person name="Mulder N."/>
            <person name="Nakano N."/>
            <person name="Nakauchi H."/>
            <person name="Ng P."/>
            <person name="Nilsson R."/>
            <person name="Nishiguchi S."/>
            <person name="Nishikawa S."/>
            <person name="Nori F."/>
            <person name="Ohara O."/>
            <person name="Okazaki Y."/>
            <person name="Orlando V."/>
            <person name="Pang K.C."/>
            <person name="Pavan W.J."/>
            <person name="Pavesi G."/>
            <person name="Pesole G."/>
            <person name="Petrovsky N."/>
            <person name="Piazza S."/>
            <person name="Reed J."/>
            <person name="Reid J.F."/>
            <person name="Ring B.Z."/>
            <person name="Ringwald M."/>
            <person name="Rost B."/>
            <person name="Ruan Y."/>
            <person name="Salzberg S.L."/>
            <person name="Sandelin A."/>
            <person name="Schneider C."/>
            <person name="Schoenbach C."/>
            <person name="Sekiguchi K."/>
            <person name="Semple C.A."/>
            <person name="Seno S."/>
            <person name="Sessa L."/>
            <person name="Sheng Y."/>
            <person name="Shibata Y."/>
            <person name="Shimada H."/>
            <person name="Shimada K."/>
            <person name="Silva D."/>
            <person name="Sinclair B."/>
            <person name="Sperling S."/>
            <person name="Stupka E."/>
            <person name="Sugiura K."/>
            <person name="Sultana R."/>
            <person name="Takenaka Y."/>
            <person name="Taki K."/>
            <person name="Tammoja K."/>
            <person name="Tan S.L."/>
            <person name="Tang S."/>
            <person name="Taylor M.S."/>
            <person name="Tegner J."/>
            <person name="Teichmann S.A."/>
            <person name="Ueda H.R."/>
            <person name="van Nimwegen E."/>
            <person name="Verardo R."/>
            <person name="Wei C.L."/>
            <person name="Yagi K."/>
            <person name="Yamanishi H."/>
            <person name="Zabarovsky E."/>
            <person name="Zhu S."/>
            <person name="Zimmer A."/>
            <person name="Hide W."/>
            <person name="Bult C."/>
            <person name="Grimmond S.M."/>
            <person name="Teasdale R.D."/>
            <person name="Liu E.T."/>
            <person name="Brusic V."/>
            <person name="Quackenbush J."/>
            <person name="Wahlestedt C."/>
            <person name="Mattick J.S."/>
            <person name="Hume D.A."/>
            <person name="Kai C."/>
            <person name="Sasaki D."/>
            <person name="Tomaru Y."/>
            <person name="Fukuda S."/>
            <person name="Kanamori-Katayama M."/>
            <person name="Suzuki M."/>
            <person name="Aoki J."/>
            <person name="Arakawa T."/>
            <person name="Iida J."/>
            <person name="Imamura K."/>
            <person name="Itoh M."/>
            <person name="Kato T."/>
            <person name="Kawaji H."/>
            <person name="Kawagashira N."/>
            <person name="Kawashima T."/>
            <person name="Kojima M."/>
            <person name="Kondo S."/>
            <person name="Konno H."/>
            <person name="Nakano K."/>
            <person name="Ninomiya N."/>
            <person name="Nishio T."/>
            <person name="Okada M."/>
            <person name="Plessy C."/>
            <person name="Shibata K."/>
            <person name="Shiraki T."/>
            <person name="Suzuki S."/>
            <person name="Tagami M."/>
            <person name="Waki K."/>
            <person name="Watahiki A."/>
            <person name="Okamura-Oho Y."/>
            <person name="Suzuki H."/>
            <person name="Kawai J."/>
            <person name="Hayashizaki Y."/>
        </authorList>
    </citation>
    <scope>NUCLEOTIDE SEQUENCE [LARGE SCALE MRNA]</scope>
    <source>
        <strain>C57BL/6J</strain>
    </source>
</reference>
<reference key="2">
    <citation type="journal article" date="2009" name="PLoS Biol.">
        <title>Lineage-specific biology revealed by a finished genome assembly of the mouse.</title>
        <authorList>
            <person name="Church D.M."/>
            <person name="Goodstadt L."/>
            <person name="Hillier L.W."/>
            <person name="Zody M.C."/>
            <person name="Goldstein S."/>
            <person name="She X."/>
            <person name="Bult C.J."/>
            <person name="Agarwala R."/>
            <person name="Cherry J.L."/>
            <person name="DiCuccio M."/>
            <person name="Hlavina W."/>
            <person name="Kapustin Y."/>
            <person name="Meric P."/>
            <person name="Maglott D."/>
            <person name="Birtle Z."/>
            <person name="Marques A.C."/>
            <person name="Graves T."/>
            <person name="Zhou S."/>
            <person name="Teague B."/>
            <person name="Potamousis K."/>
            <person name="Churas C."/>
            <person name="Place M."/>
            <person name="Herschleb J."/>
            <person name="Runnheim R."/>
            <person name="Forrest D."/>
            <person name="Amos-Landgraf J."/>
            <person name="Schwartz D.C."/>
            <person name="Cheng Z."/>
            <person name="Lindblad-Toh K."/>
            <person name="Eichler E.E."/>
            <person name="Ponting C.P."/>
        </authorList>
    </citation>
    <scope>NUCLEOTIDE SEQUENCE [LARGE SCALE GENOMIC DNA]</scope>
    <source>
        <strain>C57BL/6J</strain>
    </source>
</reference>
<reference key="3">
    <citation type="journal article" date="2010" name="Cell">
        <title>A tissue-specific atlas of mouse protein phosphorylation and expression.</title>
        <authorList>
            <person name="Huttlin E.L."/>
            <person name="Jedrychowski M.P."/>
            <person name="Elias J.E."/>
            <person name="Goswami T."/>
            <person name="Rad R."/>
            <person name="Beausoleil S.A."/>
            <person name="Villen J."/>
            <person name="Haas W."/>
            <person name="Sowa M.E."/>
            <person name="Gygi S.P."/>
        </authorList>
    </citation>
    <scope>PHOSPHORYLATION [LARGE SCALE ANALYSIS] AT SER-264; THR-984 AND SER-1263</scope>
    <scope>IDENTIFICATION BY MASS SPECTROMETRY [LARGE SCALE ANALYSIS]</scope>
    <source>
        <tissue>Brown adipose tissue</tissue>
        <tissue>Kidney</tissue>
    </source>
</reference>
<reference key="4">
    <citation type="journal article" date="2014" name="J. Neurosci.">
        <title>Dlg5 regulates dendritic spine formation and synaptogenesis by controlling subcellular N-cadherin localization.</title>
        <authorList>
            <person name="Wang S.H."/>
            <person name="Celic I."/>
            <person name="Choi S.Y."/>
            <person name="Riccomagno M."/>
            <person name="Wang Q."/>
            <person name="Sun L.O."/>
            <person name="Mitchell S.P."/>
            <person name="Vasioukhin V."/>
            <person name="Huganir R.L."/>
            <person name="Kolodkin A.L."/>
        </authorList>
    </citation>
    <scope>FUNCTION</scope>
    <scope>SUBCELLULAR LOCATION</scope>
    <scope>TISSUE SPECIFICITY</scope>
    <scope>INTERACTION WITH CTNB1</scope>
    <scope>VARIANT PRO-1642</scope>
</reference>
<reference key="5">
    <citation type="journal article" date="2015" name="Genes Dev.">
        <title>Bifurcating action of Smoothened in Hedgehog signaling is mediated by Dlg5.</title>
        <authorList>
            <person name="Chong Y.C."/>
            <person name="Mann R.K."/>
            <person name="Zhao C."/>
            <person name="Kato M."/>
            <person name="Beachy P.A."/>
        </authorList>
    </citation>
    <scope>FUNCTION</scope>
    <scope>SUBCELLULAR LOCATION</scope>
    <scope>INTERACTION WITH KIF7 AND SMO</scope>
</reference>
<reference key="6">
    <citation type="journal article" date="2016" name="Genes Dev.">
        <title>DLG5 connects cell polarity and Hippo signaling protein networks by linking PAR-1 with MST1/2.</title>
        <authorList>
            <person name="Kwan J."/>
            <person name="Sczaniecka A."/>
            <person name="Arash E.H."/>
            <person name="Nguyen L."/>
            <person name="Chen C.C."/>
            <person name="Ratkovic S."/>
            <person name="Klezovitch O."/>
            <person name="Attisano L."/>
            <person name="McNeill H."/>
            <person name="Emili A."/>
            <person name="Vasioukhin V."/>
        </authorList>
    </citation>
    <scope>FUNCTION</scope>
    <scope>INTERACTION WITH STK3; STK4 AND MARK3</scope>
</reference>
<keyword id="KW-0965">Cell junction</keyword>
<keyword id="KW-1003">Cell membrane</keyword>
<keyword id="KW-0966">Cell projection</keyword>
<keyword id="KW-0175">Coiled coil</keyword>
<keyword id="KW-0963">Cytoplasm</keyword>
<keyword id="KW-0206">Cytoskeleton</keyword>
<keyword id="KW-0472">Membrane</keyword>
<keyword id="KW-0597">Phosphoprotein</keyword>
<keyword id="KW-1185">Reference proteome</keyword>
<keyword id="KW-0728">SH3 domain</keyword>
<keyword id="KW-0770">Synapse</keyword>
<feature type="chain" id="PRO_0000440556" description="Disks large homolog 5">
    <location>
        <begin position="1"/>
        <end position="1921"/>
    </location>
</feature>
<feature type="domain" description="CARD" evidence="3">
    <location>
        <begin position="1"/>
        <end position="90"/>
    </location>
</feature>
<feature type="domain" description="PDZ 1" evidence="5">
    <location>
        <begin position="620"/>
        <end position="710"/>
    </location>
</feature>
<feature type="domain" description="PDZ 2" evidence="5">
    <location>
        <begin position="705"/>
        <end position="796"/>
    </location>
</feature>
<feature type="domain" description="PDZ 3" evidence="5">
    <location>
        <begin position="1350"/>
        <end position="1429"/>
    </location>
</feature>
<feature type="domain" description="PDZ 4" evidence="5">
    <location>
        <begin position="1504"/>
        <end position="1585"/>
    </location>
</feature>
<feature type="domain" description="SH3" evidence="6">
    <location>
        <begin position="1596"/>
        <end position="1664"/>
    </location>
</feature>
<feature type="domain" description="Guanylate kinase-like" evidence="4">
    <location>
        <begin position="1724"/>
        <end position="1907"/>
    </location>
</feature>
<feature type="region of interest" description="Disordered" evidence="7">
    <location>
        <begin position="116"/>
        <end position="143"/>
    </location>
</feature>
<feature type="region of interest" description="Disordered" evidence="7">
    <location>
        <begin position="857"/>
        <end position="898"/>
    </location>
</feature>
<feature type="region of interest" description="Disordered" evidence="7">
    <location>
        <begin position="930"/>
        <end position="1121"/>
    </location>
</feature>
<feature type="region of interest" description="Disordered" evidence="7">
    <location>
        <begin position="1204"/>
        <end position="1227"/>
    </location>
</feature>
<feature type="region of interest" description="Disordered" evidence="7">
    <location>
        <begin position="1243"/>
        <end position="1266"/>
    </location>
</feature>
<feature type="region of interest" description="Disordered" evidence="7">
    <location>
        <begin position="1280"/>
        <end position="1343"/>
    </location>
</feature>
<feature type="region of interest" description="Disordered" evidence="7">
    <location>
        <begin position="1434"/>
        <end position="1501"/>
    </location>
</feature>
<feature type="coiled-coil region" evidence="2">
    <location>
        <begin position="139"/>
        <end position="601"/>
    </location>
</feature>
<feature type="compositionally biased region" description="Polar residues" evidence="7">
    <location>
        <begin position="873"/>
        <end position="898"/>
    </location>
</feature>
<feature type="compositionally biased region" description="Basic and acidic residues" evidence="7">
    <location>
        <begin position="1017"/>
        <end position="1030"/>
    </location>
</feature>
<feature type="compositionally biased region" description="Pro residues" evidence="7">
    <location>
        <begin position="1045"/>
        <end position="1055"/>
    </location>
</feature>
<feature type="compositionally biased region" description="Polar residues" evidence="7">
    <location>
        <begin position="1217"/>
        <end position="1227"/>
    </location>
</feature>
<feature type="compositionally biased region" description="Low complexity" evidence="7">
    <location>
        <begin position="1252"/>
        <end position="1266"/>
    </location>
</feature>
<feature type="compositionally biased region" description="Polar residues" evidence="7">
    <location>
        <begin position="1292"/>
        <end position="1324"/>
    </location>
</feature>
<feature type="compositionally biased region" description="Polar residues" evidence="7">
    <location>
        <begin position="1434"/>
        <end position="1443"/>
    </location>
</feature>
<feature type="compositionally biased region" description="Polar residues" evidence="7">
    <location>
        <begin position="1450"/>
        <end position="1460"/>
    </location>
</feature>
<feature type="compositionally biased region" description="Polar residues" evidence="7">
    <location>
        <begin position="1483"/>
        <end position="1495"/>
    </location>
</feature>
<feature type="modified residue" description="Phosphoserine" evidence="12">
    <location>
        <position position="264"/>
    </location>
</feature>
<feature type="modified residue" description="Phosphoserine" evidence="1">
    <location>
        <position position="295"/>
    </location>
</feature>
<feature type="modified residue" description="Phosphoserine" evidence="1">
    <location>
        <position position="900"/>
    </location>
</feature>
<feature type="modified residue" description="Phosphothreonine" evidence="12">
    <location>
        <position position="984"/>
    </location>
</feature>
<feature type="modified residue" description="Phosphoserine" evidence="1">
    <location>
        <position position="1000"/>
    </location>
</feature>
<feature type="modified residue" description="Phosphothreonine" evidence="1">
    <location>
        <position position="1011"/>
    </location>
</feature>
<feature type="modified residue" description="Phosphoserine" evidence="1">
    <location>
        <position position="1021"/>
    </location>
</feature>
<feature type="modified residue" description="Phosphothreonine" evidence="1">
    <location>
        <position position="1183"/>
    </location>
</feature>
<feature type="modified residue" description="Phosphoserine" evidence="1">
    <location>
        <position position="1209"/>
    </location>
</feature>
<feature type="modified residue" description="Phosphoserine" evidence="12">
    <location>
        <position position="1263"/>
    </location>
</feature>
<feature type="modified residue" description="Phosphoserine" evidence="1">
    <location>
        <position position="1334"/>
    </location>
</feature>
<feature type="modified residue" description="Phosphoserine" evidence="1">
    <location>
        <position position="1669"/>
    </location>
</feature>
<feature type="sequence variant" description="In allele LP; loss of neuronal function and disruption of interactions between the SH3 and guanylate kinase-like domains." evidence="8">
    <original>L</original>
    <variation>P</variation>
    <location>
        <position position="1642"/>
    </location>
</feature>
<feature type="sequence conflict" description="In Ref. 1; BAE28082." evidence="11" ref="1">
    <original>T</original>
    <variation>P</variation>
    <location>
        <position position="946"/>
    </location>
</feature>
<proteinExistence type="evidence at protein level"/>
<dbReference type="EMBL" id="AK147699">
    <property type="protein sequence ID" value="BAE28082.1"/>
    <property type="molecule type" value="mRNA"/>
</dbReference>
<dbReference type="EMBL" id="AC163638">
    <property type="status" value="NOT_ANNOTATED_CDS"/>
    <property type="molecule type" value="Genomic_DNA"/>
</dbReference>
<dbReference type="CCDS" id="CCDS49417.1"/>
<dbReference type="RefSeq" id="NP_001156985.1">
    <property type="nucleotide sequence ID" value="NM_001163513.1"/>
</dbReference>
<dbReference type="RefSeq" id="NP_082002.1">
    <property type="nucleotide sequence ID" value="NM_027726.1"/>
</dbReference>
<dbReference type="SMR" id="E9Q9R9"/>
<dbReference type="CORUM" id="E9Q9R9"/>
<dbReference type="FunCoup" id="E9Q9R9">
    <property type="interactions" value="880"/>
</dbReference>
<dbReference type="STRING" id="10090.ENSMUSP00000087879"/>
<dbReference type="GlyGen" id="E9Q9R9">
    <property type="glycosylation" value="1 site, 1 O-linked glycan (1 site)"/>
</dbReference>
<dbReference type="iPTMnet" id="E9Q9R9"/>
<dbReference type="PhosphoSitePlus" id="E9Q9R9"/>
<dbReference type="jPOST" id="E9Q9R9"/>
<dbReference type="PaxDb" id="10090-ENSMUSP00000087879"/>
<dbReference type="ProteomicsDB" id="279724"/>
<dbReference type="Antibodypedia" id="618">
    <property type="antibodies" value="103 antibodies from 17 providers"/>
</dbReference>
<dbReference type="DNASU" id="71228"/>
<dbReference type="Ensembl" id="ENSMUST00000090398.11">
    <property type="protein sequence ID" value="ENSMUSP00000087879.5"/>
    <property type="gene ID" value="ENSMUSG00000021782.15"/>
</dbReference>
<dbReference type="GeneID" id="71228"/>
<dbReference type="KEGG" id="mmu:71228"/>
<dbReference type="UCSC" id="uc007sqg.1">
    <property type="organism name" value="mouse"/>
</dbReference>
<dbReference type="AGR" id="MGI:1918478"/>
<dbReference type="CTD" id="9231"/>
<dbReference type="MGI" id="MGI:1918478">
    <property type="gene designation" value="Dlg5"/>
</dbReference>
<dbReference type="VEuPathDB" id="HostDB:ENSMUSG00000021782"/>
<dbReference type="eggNOG" id="KOG0708">
    <property type="taxonomic scope" value="Eukaryota"/>
</dbReference>
<dbReference type="eggNOG" id="KOG3528">
    <property type="taxonomic scope" value="Eukaryota"/>
</dbReference>
<dbReference type="GeneTree" id="ENSGT00940000155303"/>
<dbReference type="HOGENOM" id="CLU_002448_1_0_1"/>
<dbReference type="InParanoid" id="E9Q9R9"/>
<dbReference type="OMA" id="QEHYMAD"/>
<dbReference type="OrthoDB" id="10067129at2759"/>
<dbReference type="PhylomeDB" id="E9Q9R9"/>
<dbReference type="TreeFam" id="TF323171"/>
<dbReference type="Reactome" id="R-MMU-9013420">
    <property type="pathway name" value="RHOU GTPase cycle"/>
</dbReference>
<dbReference type="Reactome" id="R-MMU-9013424">
    <property type="pathway name" value="RHOV GTPase cycle"/>
</dbReference>
<dbReference type="Reactome" id="R-MMU-9696264">
    <property type="pathway name" value="RND3 GTPase cycle"/>
</dbReference>
<dbReference type="Reactome" id="R-MMU-9696270">
    <property type="pathway name" value="RND2 GTPase cycle"/>
</dbReference>
<dbReference type="Reactome" id="R-MMU-9696273">
    <property type="pathway name" value="RND1 GTPase cycle"/>
</dbReference>
<dbReference type="BioGRID-ORCS" id="71228">
    <property type="hits" value="4 hits in 75 CRISPR screens"/>
</dbReference>
<dbReference type="ChiTaRS" id="Dlg5">
    <property type="organism name" value="mouse"/>
</dbReference>
<dbReference type="PRO" id="PR:E9Q9R9"/>
<dbReference type="Proteomes" id="UP000000589">
    <property type="component" value="Chromosome 14"/>
</dbReference>
<dbReference type="RNAct" id="E9Q9R9">
    <property type="molecule type" value="protein"/>
</dbReference>
<dbReference type="Bgee" id="ENSMUSG00000021782">
    <property type="expression patterns" value="Expressed in placenta labyrinth and 248 other cell types or tissues"/>
</dbReference>
<dbReference type="ExpressionAtlas" id="E9Q9R9">
    <property type="expression patterns" value="baseline and differential"/>
</dbReference>
<dbReference type="GO" id="GO:0005912">
    <property type="term" value="C:adherens junction"/>
    <property type="evidence" value="ECO:0000314"/>
    <property type="project" value="MGI"/>
</dbReference>
<dbReference type="GO" id="GO:0030054">
    <property type="term" value="C:cell junction"/>
    <property type="evidence" value="ECO:0000250"/>
    <property type="project" value="UniProtKB"/>
</dbReference>
<dbReference type="GO" id="GO:0036064">
    <property type="term" value="C:ciliary basal body"/>
    <property type="evidence" value="ECO:0000314"/>
    <property type="project" value="UniProtKB"/>
</dbReference>
<dbReference type="GO" id="GO:0005737">
    <property type="term" value="C:cytoplasm"/>
    <property type="evidence" value="ECO:0007669"/>
    <property type="project" value="UniProtKB-KW"/>
</dbReference>
<dbReference type="GO" id="GO:0098978">
    <property type="term" value="C:glutamatergic synapse"/>
    <property type="evidence" value="ECO:0000314"/>
    <property type="project" value="SynGO"/>
</dbReference>
<dbReference type="GO" id="GO:0005886">
    <property type="term" value="C:plasma membrane"/>
    <property type="evidence" value="ECO:0007669"/>
    <property type="project" value="UniProtKB-SubCell"/>
</dbReference>
<dbReference type="GO" id="GO:0014069">
    <property type="term" value="C:postsynaptic density"/>
    <property type="evidence" value="ECO:0000314"/>
    <property type="project" value="UniProtKB"/>
</dbReference>
<dbReference type="GO" id="GO:0008013">
    <property type="term" value="F:beta-catenin binding"/>
    <property type="evidence" value="ECO:0000266"/>
    <property type="project" value="MGI"/>
</dbReference>
<dbReference type="GO" id="GO:0008092">
    <property type="term" value="F:cytoskeletal protein binding"/>
    <property type="evidence" value="ECO:0000266"/>
    <property type="project" value="MGI"/>
</dbReference>
<dbReference type="GO" id="GO:0045176">
    <property type="term" value="P:apical protein localization"/>
    <property type="evidence" value="ECO:0000315"/>
    <property type="project" value="MGI"/>
</dbReference>
<dbReference type="GO" id="GO:0001837">
    <property type="term" value="P:epithelial to mesenchymal transition"/>
    <property type="evidence" value="ECO:0000250"/>
    <property type="project" value="UniProtKB"/>
</dbReference>
<dbReference type="GO" id="GO:0060441">
    <property type="term" value="P:epithelial tube branching involved in lung morphogenesis"/>
    <property type="evidence" value="ECO:0000315"/>
    <property type="project" value="MGI"/>
</dbReference>
<dbReference type="GO" id="GO:0045197">
    <property type="term" value="P:establishment or maintenance of epithelial cell apical/basal polarity"/>
    <property type="evidence" value="ECO:0000315"/>
    <property type="project" value="MGI"/>
</dbReference>
<dbReference type="GO" id="GO:0010001">
    <property type="term" value="P:glial cell differentiation"/>
    <property type="evidence" value="ECO:0000315"/>
    <property type="project" value="MGI"/>
</dbReference>
<dbReference type="GO" id="GO:0030011">
    <property type="term" value="P:maintenance of cell polarity"/>
    <property type="evidence" value="ECO:0000250"/>
    <property type="project" value="UniProtKB"/>
</dbReference>
<dbReference type="GO" id="GO:0072205">
    <property type="term" value="P:metanephric collecting duct development"/>
    <property type="evidence" value="ECO:0000315"/>
    <property type="project" value="MGI"/>
</dbReference>
<dbReference type="GO" id="GO:0030901">
    <property type="term" value="P:midbrain development"/>
    <property type="evidence" value="ECO:0000315"/>
    <property type="project" value="MGI"/>
</dbReference>
<dbReference type="GO" id="GO:0030336">
    <property type="term" value="P:negative regulation of cell migration"/>
    <property type="evidence" value="ECO:0000250"/>
    <property type="project" value="UniProtKB"/>
</dbReference>
<dbReference type="GO" id="GO:0035331">
    <property type="term" value="P:negative regulation of hippo signaling"/>
    <property type="evidence" value="ECO:0000315"/>
    <property type="project" value="UniProtKB"/>
</dbReference>
<dbReference type="GO" id="GO:0042130">
    <property type="term" value="P:negative regulation of T cell proliferation"/>
    <property type="evidence" value="ECO:0000250"/>
    <property type="project" value="UniProtKB"/>
</dbReference>
<dbReference type="GO" id="GO:0060563">
    <property type="term" value="P:neuroepithelial cell differentiation"/>
    <property type="evidence" value="ECO:0000315"/>
    <property type="project" value="MGI"/>
</dbReference>
<dbReference type="GO" id="GO:0030859">
    <property type="term" value="P:polarized epithelial cell differentiation"/>
    <property type="evidence" value="ECO:0000315"/>
    <property type="project" value="MGI"/>
</dbReference>
<dbReference type="GO" id="GO:0060999">
    <property type="term" value="P:positive regulation of dendritic spine development"/>
    <property type="evidence" value="ECO:0000315"/>
    <property type="project" value="UniProtKB"/>
</dbReference>
<dbReference type="GO" id="GO:0035332">
    <property type="term" value="P:positive regulation of hippo signaling"/>
    <property type="evidence" value="ECO:0000250"/>
    <property type="project" value="UniProtKB"/>
</dbReference>
<dbReference type="GO" id="GO:0045880">
    <property type="term" value="P:positive regulation of smoothened signaling pathway"/>
    <property type="evidence" value="ECO:0000315"/>
    <property type="project" value="UniProtKB"/>
</dbReference>
<dbReference type="GO" id="GO:0051965">
    <property type="term" value="P:positive regulation of synapse assembly"/>
    <property type="evidence" value="ECO:0000315"/>
    <property type="project" value="UniProtKB"/>
</dbReference>
<dbReference type="GO" id="GO:0099173">
    <property type="term" value="P:postsynapse organization"/>
    <property type="evidence" value="ECO:0000314"/>
    <property type="project" value="SynGO"/>
</dbReference>
<dbReference type="GO" id="GO:0071896">
    <property type="term" value="P:protein localization to adherens junction"/>
    <property type="evidence" value="ECO:0000315"/>
    <property type="project" value="MGI"/>
</dbReference>
<dbReference type="GO" id="GO:0065003">
    <property type="term" value="P:protein-containing complex assembly"/>
    <property type="evidence" value="ECO:0000315"/>
    <property type="project" value="MGI"/>
</dbReference>
<dbReference type="GO" id="GO:0042981">
    <property type="term" value="P:regulation of apoptotic process"/>
    <property type="evidence" value="ECO:0007669"/>
    <property type="project" value="InterPro"/>
</dbReference>
<dbReference type="GO" id="GO:0045186">
    <property type="term" value="P:zonula adherens assembly"/>
    <property type="evidence" value="ECO:0000315"/>
    <property type="project" value="MGI"/>
</dbReference>
<dbReference type="CDD" id="cd06764">
    <property type="entry name" value="PDZ1_DLG5-like"/>
    <property type="match status" value="1"/>
</dbReference>
<dbReference type="CDD" id="cd06765">
    <property type="entry name" value="PDZ2_DLG5-like"/>
    <property type="match status" value="1"/>
</dbReference>
<dbReference type="CDD" id="cd06767">
    <property type="entry name" value="PDZ3_DLG5-like"/>
    <property type="match status" value="1"/>
</dbReference>
<dbReference type="CDD" id="cd06766">
    <property type="entry name" value="PDZ4_DLG5-like"/>
    <property type="match status" value="1"/>
</dbReference>
<dbReference type="CDD" id="cd11860">
    <property type="entry name" value="SH3_DLG5"/>
    <property type="match status" value="1"/>
</dbReference>
<dbReference type="FunFam" id="2.30.30.40:FF:000130">
    <property type="entry name" value="Discs large 5, isoform A"/>
    <property type="match status" value="1"/>
</dbReference>
<dbReference type="FunFam" id="3.40.50.300:FF:000894">
    <property type="entry name" value="Discs large MAGUK scaffold protein 5"/>
    <property type="match status" value="1"/>
</dbReference>
<dbReference type="FunFam" id="2.30.42.10:FF:000132">
    <property type="entry name" value="disks large homolog 5 isoform X1"/>
    <property type="match status" value="1"/>
</dbReference>
<dbReference type="FunFam" id="2.30.42.10:FF:000152">
    <property type="entry name" value="disks large homolog 5 isoform X1"/>
    <property type="match status" value="1"/>
</dbReference>
<dbReference type="Gene3D" id="2.30.42.10">
    <property type="match status" value="4"/>
</dbReference>
<dbReference type="Gene3D" id="1.10.533.10">
    <property type="entry name" value="Death Domain, Fas"/>
    <property type="match status" value="1"/>
</dbReference>
<dbReference type="Gene3D" id="3.40.50.300">
    <property type="entry name" value="P-loop containing nucleotide triphosphate hydrolases"/>
    <property type="match status" value="1"/>
</dbReference>
<dbReference type="Gene3D" id="2.30.30.40">
    <property type="entry name" value="SH3 Domains"/>
    <property type="match status" value="1"/>
</dbReference>
<dbReference type="InterPro" id="IPR001315">
    <property type="entry name" value="CARD"/>
</dbReference>
<dbReference type="InterPro" id="IPR011029">
    <property type="entry name" value="DEATH-like_dom_sf"/>
</dbReference>
<dbReference type="InterPro" id="IPR006907">
    <property type="entry name" value="DLG5_N"/>
</dbReference>
<dbReference type="InterPro" id="IPR035537">
    <property type="entry name" value="DLG5_SH3"/>
</dbReference>
<dbReference type="InterPro" id="IPR008145">
    <property type="entry name" value="GK/Ca_channel_bsu"/>
</dbReference>
<dbReference type="InterPro" id="IPR008144">
    <property type="entry name" value="Guanylate_kin-like_dom"/>
</dbReference>
<dbReference type="InterPro" id="IPR053004">
    <property type="entry name" value="MAGUK_Signaling_Regulators"/>
</dbReference>
<dbReference type="InterPro" id="IPR027417">
    <property type="entry name" value="P-loop_NTPase"/>
</dbReference>
<dbReference type="InterPro" id="IPR001478">
    <property type="entry name" value="PDZ"/>
</dbReference>
<dbReference type="InterPro" id="IPR036034">
    <property type="entry name" value="PDZ_sf"/>
</dbReference>
<dbReference type="InterPro" id="IPR036028">
    <property type="entry name" value="SH3-like_dom_sf"/>
</dbReference>
<dbReference type="InterPro" id="IPR001452">
    <property type="entry name" value="SH3_domain"/>
</dbReference>
<dbReference type="PANTHER" id="PTHR46360">
    <property type="entry name" value="DISKS LARGE HOMOLOG 5"/>
    <property type="match status" value="1"/>
</dbReference>
<dbReference type="PANTHER" id="PTHR46360:SF1">
    <property type="entry name" value="DISKS LARGE HOMOLOG 5"/>
    <property type="match status" value="1"/>
</dbReference>
<dbReference type="Pfam" id="PF16610">
    <property type="entry name" value="dbPDZ_assoc"/>
    <property type="match status" value="1"/>
</dbReference>
<dbReference type="Pfam" id="PF00625">
    <property type="entry name" value="Guanylate_kin"/>
    <property type="match status" value="1"/>
</dbReference>
<dbReference type="Pfam" id="PF00595">
    <property type="entry name" value="PDZ"/>
    <property type="match status" value="3"/>
</dbReference>
<dbReference type="Pfam" id="PF04822">
    <property type="entry name" value="Takusan"/>
    <property type="match status" value="1"/>
</dbReference>
<dbReference type="SMART" id="SM00072">
    <property type="entry name" value="GuKc"/>
    <property type="match status" value="1"/>
</dbReference>
<dbReference type="SMART" id="SM00228">
    <property type="entry name" value="PDZ"/>
    <property type="match status" value="4"/>
</dbReference>
<dbReference type="SMART" id="SM00326">
    <property type="entry name" value="SH3"/>
    <property type="match status" value="1"/>
</dbReference>
<dbReference type="SUPFAM" id="SSF47986">
    <property type="entry name" value="DEATH domain"/>
    <property type="match status" value="1"/>
</dbReference>
<dbReference type="SUPFAM" id="SSF52540">
    <property type="entry name" value="P-loop containing nucleoside triphosphate hydrolases"/>
    <property type="match status" value="1"/>
</dbReference>
<dbReference type="SUPFAM" id="SSF50156">
    <property type="entry name" value="PDZ domain-like"/>
    <property type="match status" value="4"/>
</dbReference>
<dbReference type="SUPFAM" id="SSF50044">
    <property type="entry name" value="SH3-domain"/>
    <property type="match status" value="1"/>
</dbReference>
<dbReference type="PROSITE" id="PS50209">
    <property type="entry name" value="CARD"/>
    <property type="match status" value="1"/>
</dbReference>
<dbReference type="PROSITE" id="PS50052">
    <property type="entry name" value="GUANYLATE_KINASE_2"/>
    <property type="match status" value="1"/>
</dbReference>
<dbReference type="PROSITE" id="PS50106">
    <property type="entry name" value="PDZ"/>
    <property type="match status" value="4"/>
</dbReference>
<dbReference type="PROSITE" id="PS50002">
    <property type="entry name" value="SH3"/>
    <property type="match status" value="1"/>
</dbReference>
<accession>E9Q9R9</accession>
<accession>Q3UGX5</accession>
<protein>
    <recommendedName>
        <fullName>Disks large homolog 5</fullName>
    </recommendedName>
</protein>
<evidence type="ECO:0000250" key="1">
    <source>
        <dbReference type="UniProtKB" id="Q8TDM6"/>
    </source>
</evidence>
<evidence type="ECO:0000255" key="2"/>
<evidence type="ECO:0000255" key="3">
    <source>
        <dbReference type="PROSITE-ProRule" id="PRU00046"/>
    </source>
</evidence>
<evidence type="ECO:0000255" key="4">
    <source>
        <dbReference type="PROSITE-ProRule" id="PRU00100"/>
    </source>
</evidence>
<evidence type="ECO:0000255" key="5">
    <source>
        <dbReference type="PROSITE-ProRule" id="PRU00143"/>
    </source>
</evidence>
<evidence type="ECO:0000255" key="6">
    <source>
        <dbReference type="PROSITE-ProRule" id="PRU00192"/>
    </source>
</evidence>
<evidence type="ECO:0000256" key="7">
    <source>
        <dbReference type="SAM" id="MobiDB-lite"/>
    </source>
</evidence>
<evidence type="ECO:0000269" key="8">
    <source>
    </source>
</evidence>
<evidence type="ECO:0000269" key="9">
    <source>
    </source>
</evidence>
<evidence type="ECO:0000269" key="10">
    <source>
    </source>
</evidence>
<evidence type="ECO:0000305" key="11"/>
<evidence type="ECO:0007744" key="12">
    <source>
    </source>
</evidence>
<comment type="function">
    <text evidence="1 8 9 10">Acts as a regulator of the Hippo signaling pathway. Negatively regulates the Hippo signaling pathway by mediating the interaction of MARK3 with STK3/4, bringing them together to promote MARK3-dependent hyperphosphorylation and inactivation of STK3 kinase activity toward LATS1 (PubMed:28087714). Positively regulates the Hippo signaling by mediating the interaction of SCRIB with STK4/MST1 and LATS1 which is important for the activation of the Hippo signaling pathway. Involved in regulating cell proliferation, maintenance of epithelial polarity, epithelial-mesenchymal transition (EMT), cell migration and invasion (By similarity). Plays an important role in dendritic spine formation and synaptogenesis in cortical neurons; regulates synaptogenesis by enhancing the cell surface localization of N-cadherin (PubMed:25232112). Acts as a positive regulator of hedgehog (Hh) signaling pathway. Plays a critical role in the early point of the SMO activity cycle by interacting with SMO at the ciliary base to induce the accumulation of KIF7 and GLI2 at the ciliary tip for GLI2 activation (PubMed:25644602).</text>
</comment>
<comment type="subunit">
    <text evidence="1 8 9 10">Interacts with MPP1. Interacts with CTNNB1 and with the third SH3 domain of SORBS3 to form a ternary complex (By similarity). Interacts (via coiled-coil domain) with MARK3. Interacts (via PDZ domain 3) with STK3/MST2 and STK4/MST1 (PubMed:28087714). Interacts with SCRIB (By similarity). Interacts with CTNB1 (PubMed:25232112). Interacts with SMO and (via PDZ4 or guanylate kinase-like domain) with KIF7 (PubMed:25644602).</text>
</comment>
<comment type="subcellular location">
    <subcellularLocation>
        <location evidence="1">Cell junction</location>
    </subcellularLocation>
    <subcellularLocation>
        <location evidence="1">Cell membrane</location>
        <topology evidence="1">Peripheral membrane protein</topology>
    </subcellularLocation>
    <subcellularLocation>
        <location evidence="8">Postsynaptic density</location>
    </subcellularLocation>
    <subcellularLocation>
        <location evidence="9">Cytoplasm</location>
        <location evidence="9">Cytoskeleton</location>
        <location evidence="9">Cilium basal body</location>
    </subcellularLocation>
    <text evidence="1">Localized at sites of cell-cell contact.</text>
</comment>
<comment type="tissue specificity">
    <text evidence="8">Brain (at protein level).</text>
</comment>
<comment type="domain">
    <text evidence="8">The guanylate kinase-like domain interacts with the SH3 domain.</text>
</comment>
<comment type="similarity">
    <text evidence="11">Belongs to the MAGUK family.</text>
</comment>
<organism>
    <name type="scientific">Mus musculus</name>
    <name type="common">Mouse</name>
    <dbReference type="NCBI Taxonomy" id="10090"/>
    <lineage>
        <taxon>Eukaryota</taxon>
        <taxon>Metazoa</taxon>
        <taxon>Chordata</taxon>
        <taxon>Craniata</taxon>
        <taxon>Vertebrata</taxon>
        <taxon>Euteleostomi</taxon>
        <taxon>Mammalia</taxon>
        <taxon>Eutheria</taxon>
        <taxon>Euarchontoglires</taxon>
        <taxon>Glires</taxon>
        <taxon>Rodentia</taxon>
        <taxon>Myomorpha</taxon>
        <taxon>Muroidea</taxon>
        <taxon>Muridae</taxon>
        <taxon>Murinae</taxon>
        <taxon>Mus</taxon>
        <taxon>Mus</taxon>
    </lineage>
</organism>
<sequence>MEPQRRELLAQCQQSLAQAMTEVEAVLGLLEAAGALSPGERRQLDEEAGGAKAELLLQLLLAKEQDHFQDLRAALEKTQPHLLPILYLNGVVGPPQSTEGAGSTYSVLSIMPSDSESSSSLSSVGTTGKAPSPPPLLTEQQANDTVENLSIQLRLMTRERNELRKRLAFATHGATFDKRPYHRLNPDYERLKIQCVRAMSDLQSLQNQHTNALKRCEEVAKETDFYHTLHSRLLSDQTQLKDDVDMLRRENGKLRRERNLLQQSWEDMKRLREEDQKEIGDLRAQQQQVLKHNGSSEILNKLYDTAMDKLEVVKKDYDALRKRYSEKVAMHNSDLSRLEQLGEENQRLQKQTEMLTQQRDTAIQLQHQCALSLRRFETIHHELSKATAQNKDLQWEMELLQSELTELRSKQVKTAKESEKYKEERDAVYSEYKLIMSERDQVISELDKLQTEVELAESKLKSSTSEKKAASEEMEALRQIKDTVTMDAGRANKEVEILRKQCKALCQELKEALQEADVAKCRRDWAFQERDKIVAERDSIRTLCDNLRRERDRAVSELAEALRSLDDTRKQKNDVSRELKELKEQMECQLEKEARFRQLMAHSSHDSAIDTDSMEWETEVVEFERETEDIDLKALGFDMAEGVNEPCFPGDCGIFVTKVDKGSIADGRLRVNDWLLRINDVDLINKDKKQAIKALLNGEGAINMVVRRRKSLGGKVVTPLHINLSGQKDSGISLENGVYAAAVVPGSPAAKEGSLAVGDRIVAINGIALDNKSLNECESLLRSCQDSLTLSLLKVFPQSSSWSGQNIFENIKDSDRMLSCRAHGPEVQAHNKRNLLQHNNSTQTDIFYTDRLEDRKELGHSGGSSSFLHKPFSGSSSPVSPQACPSTSERSLNSFRSDTSAERGYGLVDMRSQRPLLSFETEVGPCGAVEVPLDKIDPEGSNSGGTWPKAVLGSTSGPEKLSVYKKPKQRKSIFDPNTFKRPQTPPKIDYLLPGPGLTHSPQPSKRVGSLTPPKPPRRSDSIKFQHRLETSSESEATLVGSSPSTSPPSAPPPSMDPSEPTHASPPRKARVRIASSYHSEGDGDTSYLPAKKPCDEDLTSQKVDELGQKRRRPKSAPSFRPKISPVVIPAQCLEEQECVPAIGELSPEGQEWSPYSPGHASRHGNPLLYPNRPSVGTVPRSMTPGTTVGSILRNPIYTVRSHRVLPCGSPPVPRDAGSQSLSPSVQHQGRLSLDLSHRACSDYSEMRASQGSNSLPSSARLGSSSNLQFKAERIKIPLTPRYPRSVMGSDRGSLSHSECSTPPRSPLNIDTLSSCSQPQTTASTLPRIAVNPSSHGERRKDRPFVEEPRHVKVQKGSEPLGISIVSGEKGGVYVSKVTLGSIAHQAGLEYGDQLLEFNGINLRSATEQQARLIIGQQCDTITILAQYNPHIHQLNSHSRSSSHLDPAATPHSTLQGSSAGTPEHPSVIDPLMEQDEGPGTPPAKQSASSTRSVGDTTKKTPDPRIVFIKKSQLDLGVHLCGGNLHGVFVAEVEDDSPAKGPDGLVPGDLILEYGSLDMRSRTVEDVYVEMLKPKDSLRLKVQYRHEEFTRVKGLPGDSFYIRALYDRLAEVEPELSFKKDDILYVDDTLPQGVFGSWMAWQLDENAQKIQRGQIPSKYVMDQEFSRRLSMSEVKDDNTAKTLSAAARRSFFRRKHKHKRSGSKDGKDLLALDTFSNDSIPLFEDSVSLAYQRVQKVDCTSLRPVLLLGPLLDVVKEMLVNEAPGKFCRCPLEVMKASQQAIERGVKDCLFVDYKRRSGHFDVTTVASIKEITEKNRHCLLDIAPHAIERLHHMHIYPIVIFIRYKSAKHIKEQRDPVYLRDKVTQRHSKEQFETAQKIDQEYSRYFTGVVQGGALSSICTQILAMVSQEQSKVLWIPACPP</sequence>
<name>DLG5_MOUSE</name>